<name>RS7_HELMI</name>
<organism>
    <name type="scientific">Heliobacterium modesticaldum (strain ATCC 51547 / Ice1)</name>
    <dbReference type="NCBI Taxonomy" id="498761"/>
    <lineage>
        <taxon>Bacteria</taxon>
        <taxon>Bacillati</taxon>
        <taxon>Bacillota</taxon>
        <taxon>Clostridia</taxon>
        <taxon>Eubacteriales</taxon>
        <taxon>Heliobacteriaceae</taxon>
        <taxon>Heliomicrobium</taxon>
    </lineage>
</organism>
<protein>
    <recommendedName>
        <fullName evidence="1">Small ribosomal subunit protein uS7</fullName>
    </recommendedName>
    <alternativeName>
        <fullName evidence="2">30S ribosomal protein S7</fullName>
    </alternativeName>
</protein>
<sequence length="156" mass="17546">MPRRGSVARREVLPDPIYNSKVVTKLANQIMLDGKKSTAEAILYGALDVIKEKTNKNPMEVLEAALKNVMPLLEVKARRVGGANYQVPVEVRPERRQTLGLRWLVKYSRERSGKTMIDKLAGEIMDAANNTGGAVKKKEDTHKMAEANKAFAHYRW</sequence>
<dbReference type="EMBL" id="CP000930">
    <property type="protein sequence ID" value="ABZ83951.1"/>
    <property type="molecule type" value="Genomic_DNA"/>
</dbReference>
<dbReference type="RefSeq" id="WP_012282467.1">
    <property type="nucleotide sequence ID" value="NC_010337.2"/>
</dbReference>
<dbReference type="SMR" id="B0TC52"/>
<dbReference type="STRING" id="498761.HM1_1374"/>
<dbReference type="KEGG" id="hmo:HM1_1374"/>
<dbReference type="eggNOG" id="COG0049">
    <property type="taxonomic scope" value="Bacteria"/>
</dbReference>
<dbReference type="HOGENOM" id="CLU_072226_1_1_9"/>
<dbReference type="OrthoDB" id="9807653at2"/>
<dbReference type="Proteomes" id="UP000008550">
    <property type="component" value="Chromosome"/>
</dbReference>
<dbReference type="GO" id="GO:0015935">
    <property type="term" value="C:small ribosomal subunit"/>
    <property type="evidence" value="ECO:0007669"/>
    <property type="project" value="InterPro"/>
</dbReference>
<dbReference type="GO" id="GO:0019843">
    <property type="term" value="F:rRNA binding"/>
    <property type="evidence" value="ECO:0007669"/>
    <property type="project" value="UniProtKB-UniRule"/>
</dbReference>
<dbReference type="GO" id="GO:0003735">
    <property type="term" value="F:structural constituent of ribosome"/>
    <property type="evidence" value="ECO:0007669"/>
    <property type="project" value="InterPro"/>
</dbReference>
<dbReference type="GO" id="GO:0000049">
    <property type="term" value="F:tRNA binding"/>
    <property type="evidence" value="ECO:0007669"/>
    <property type="project" value="UniProtKB-UniRule"/>
</dbReference>
<dbReference type="GO" id="GO:0006412">
    <property type="term" value="P:translation"/>
    <property type="evidence" value="ECO:0007669"/>
    <property type="project" value="UniProtKB-UniRule"/>
</dbReference>
<dbReference type="CDD" id="cd14869">
    <property type="entry name" value="uS7_Bacteria"/>
    <property type="match status" value="1"/>
</dbReference>
<dbReference type="FunFam" id="1.10.455.10:FF:000001">
    <property type="entry name" value="30S ribosomal protein S7"/>
    <property type="match status" value="1"/>
</dbReference>
<dbReference type="Gene3D" id="1.10.455.10">
    <property type="entry name" value="Ribosomal protein S7 domain"/>
    <property type="match status" value="1"/>
</dbReference>
<dbReference type="HAMAP" id="MF_00480_B">
    <property type="entry name" value="Ribosomal_uS7_B"/>
    <property type="match status" value="1"/>
</dbReference>
<dbReference type="InterPro" id="IPR000235">
    <property type="entry name" value="Ribosomal_uS7"/>
</dbReference>
<dbReference type="InterPro" id="IPR005717">
    <property type="entry name" value="Ribosomal_uS7_bac/org-type"/>
</dbReference>
<dbReference type="InterPro" id="IPR020606">
    <property type="entry name" value="Ribosomal_uS7_CS"/>
</dbReference>
<dbReference type="InterPro" id="IPR023798">
    <property type="entry name" value="Ribosomal_uS7_dom"/>
</dbReference>
<dbReference type="InterPro" id="IPR036823">
    <property type="entry name" value="Ribosomal_uS7_dom_sf"/>
</dbReference>
<dbReference type="NCBIfam" id="TIGR01029">
    <property type="entry name" value="rpsG_bact"/>
    <property type="match status" value="1"/>
</dbReference>
<dbReference type="PANTHER" id="PTHR11205">
    <property type="entry name" value="RIBOSOMAL PROTEIN S7"/>
    <property type="match status" value="1"/>
</dbReference>
<dbReference type="Pfam" id="PF00177">
    <property type="entry name" value="Ribosomal_S7"/>
    <property type="match status" value="1"/>
</dbReference>
<dbReference type="PIRSF" id="PIRSF002122">
    <property type="entry name" value="RPS7p_RPS7a_RPS5e_RPS7o"/>
    <property type="match status" value="1"/>
</dbReference>
<dbReference type="SUPFAM" id="SSF47973">
    <property type="entry name" value="Ribosomal protein S7"/>
    <property type="match status" value="1"/>
</dbReference>
<dbReference type="PROSITE" id="PS00052">
    <property type="entry name" value="RIBOSOMAL_S7"/>
    <property type="match status" value="1"/>
</dbReference>
<proteinExistence type="inferred from homology"/>
<evidence type="ECO:0000255" key="1">
    <source>
        <dbReference type="HAMAP-Rule" id="MF_00480"/>
    </source>
</evidence>
<evidence type="ECO:0000305" key="2"/>
<feature type="chain" id="PRO_1000125953" description="Small ribosomal subunit protein uS7">
    <location>
        <begin position="1"/>
        <end position="156"/>
    </location>
</feature>
<keyword id="KW-1185">Reference proteome</keyword>
<keyword id="KW-0687">Ribonucleoprotein</keyword>
<keyword id="KW-0689">Ribosomal protein</keyword>
<keyword id="KW-0694">RNA-binding</keyword>
<keyword id="KW-0699">rRNA-binding</keyword>
<keyword id="KW-0820">tRNA-binding</keyword>
<gene>
    <name evidence="1" type="primary">rpsG</name>
    <name type="ordered locus">Helmi_13260</name>
    <name type="ORF">HM1_1374</name>
</gene>
<reference key="1">
    <citation type="journal article" date="2008" name="J. Bacteriol.">
        <title>The genome of Heliobacterium modesticaldum, a phototrophic representative of the Firmicutes containing the simplest photosynthetic apparatus.</title>
        <authorList>
            <person name="Sattley W.M."/>
            <person name="Madigan M.T."/>
            <person name="Swingley W.D."/>
            <person name="Cheung P.C."/>
            <person name="Clocksin K.M."/>
            <person name="Conrad A.L."/>
            <person name="Dejesa L.C."/>
            <person name="Honchak B.M."/>
            <person name="Jung D.O."/>
            <person name="Karbach L.E."/>
            <person name="Kurdoglu A."/>
            <person name="Lahiri S."/>
            <person name="Mastrian S.D."/>
            <person name="Page L.E."/>
            <person name="Taylor H.L."/>
            <person name="Wang Z.T."/>
            <person name="Raymond J."/>
            <person name="Chen M."/>
            <person name="Blankenship R.E."/>
            <person name="Touchman J.W."/>
        </authorList>
    </citation>
    <scope>NUCLEOTIDE SEQUENCE [LARGE SCALE GENOMIC DNA]</scope>
    <source>
        <strain>ATCC 51547 / Ice1</strain>
    </source>
</reference>
<accession>B0TC52</accession>
<comment type="function">
    <text evidence="1">One of the primary rRNA binding proteins, it binds directly to 16S rRNA where it nucleates assembly of the head domain of the 30S subunit. Is located at the subunit interface close to the decoding center, probably blocks exit of the E-site tRNA.</text>
</comment>
<comment type="subunit">
    <text evidence="1">Part of the 30S ribosomal subunit. Contacts proteins S9 and S11.</text>
</comment>
<comment type="similarity">
    <text evidence="1">Belongs to the universal ribosomal protein uS7 family.</text>
</comment>